<accession>B0R611</accession>
<feature type="chain" id="PRO_0000411152" description="Putative cobalt transport protein CbiM">
    <location>
        <begin position="1"/>
        <end position="220"/>
    </location>
</feature>
<feature type="transmembrane region" description="Helical" evidence="1">
    <location>
        <begin position="6"/>
        <end position="26"/>
    </location>
</feature>
<feature type="transmembrane region" description="Helical" evidence="1">
    <location>
        <begin position="45"/>
        <end position="65"/>
    </location>
</feature>
<feature type="transmembrane region" description="Helical" evidence="1">
    <location>
        <begin position="74"/>
        <end position="94"/>
    </location>
</feature>
<feature type="transmembrane region" description="Helical" evidence="1">
    <location>
        <begin position="107"/>
        <end position="127"/>
    </location>
</feature>
<feature type="transmembrane region" description="Helical" evidence="1">
    <location>
        <begin position="153"/>
        <end position="173"/>
    </location>
</feature>
<feature type="transmembrane region" description="Helical" evidence="1">
    <location>
        <begin position="188"/>
        <end position="208"/>
    </location>
</feature>
<proteinExistence type="inferred from homology"/>
<gene>
    <name evidence="1" type="primary">cbiM</name>
    <name type="ordered locus">OE_3319R</name>
</gene>
<comment type="function">
    <text evidence="1">Part of the energy-coupling factor (ECF) transporter complex CbiMNOQ involved in cobalt import.</text>
</comment>
<comment type="pathway">
    <text evidence="1">Cofactor biosynthesis; adenosylcobalamin biosynthesis.</text>
</comment>
<comment type="subunit">
    <text evidence="1">Forms an energy-coupling factor (ECF) transporter complex composed of an ATP-binding protein (A component, CbiO), a transmembrane protein (T component, CbiQ) and 2 possible substrate-capture proteins (S components, CbiM and CbiN) of unknown stoichimetry.</text>
</comment>
<comment type="subcellular location">
    <subcellularLocation>
        <location evidence="1">Cell membrane</location>
        <topology evidence="1">Multi-pass membrane protein</topology>
    </subcellularLocation>
</comment>
<comment type="similarity">
    <text evidence="1">Belongs to the CbiM family.</text>
</comment>
<sequence>MHIMEGFLPGIWALVWFVVAIPVISYGALKTARLARNDELNKSHIAVAAAFIFVLSALKIPSVTGSTSHPTGTGIAVVLFGPAVTAFLSAIVLLYQALLLGHGGLTTLGANVVSMGVVGPVAGWVVFRALNPYLDLQKATFAAAVIADWTTYLVTSIQLGVAFPSGPGVAGVVDSIVRFASVFSITQIPIGIVEGALAAGLIGYIAMSRQSIKTRLGVTA</sequence>
<keyword id="KW-1003">Cell membrane</keyword>
<keyword id="KW-0169">Cobalamin biosynthesis</keyword>
<keyword id="KW-0170">Cobalt</keyword>
<keyword id="KW-0171">Cobalt transport</keyword>
<keyword id="KW-0406">Ion transport</keyword>
<keyword id="KW-0472">Membrane</keyword>
<keyword id="KW-0812">Transmembrane</keyword>
<keyword id="KW-1133">Transmembrane helix</keyword>
<keyword id="KW-0813">Transport</keyword>
<name>CBIM_HALS3</name>
<evidence type="ECO:0000255" key="1">
    <source>
        <dbReference type="HAMAP-Rule" id="MF_01462"/>
    </source>
</evidence>
<organism>
    <name type="scientific">Halobacterium salinarum (strain ATCC 29341 / DSM 671 / R1)</name>
    <dbReference type="NCBI Taxonomy" id="478009"/>
    <lineage>
        <taxon>Archaea</taxon>
        <taxon>Methanobacteriati</taxon>
        <taxon>Methanobacteriota</taxon>
        <taxon>Stenosarchaea group</taxon>
        <taxon>Halobacteria</taxon>
        <taxon>Halobacteriales</taxon>
        <taxon>Halobacteriaceae</taxon>
        <taxon>Halobacterium</taxon>
        <taxon>Halobacterium salinarum NRC-34001</taxon>
    </lineage>
</organism>
<reference key="1">
    <citation type="journal article" date="2008" name="Genomics">
        <title>Evolution in the laboratory: the genome of Halobacterium salinarum strain R1 compared to that of strain NRC-1.</title>
        <authorList>
            <person name="Pfeiffer F."/>
            <person name="Schuster S.C."/>
            <person name="Broicher A."/>
            <person name="Falb M."/>
            <person name="Palm P."/>
            <person name="Rodewald K."/>
            <person name="Ruepp A."/>
            <person name="Soppa J."/>
            <person name="Tittor J."/>
            <person name="Oesterhelt D."/>
        </authorList>
    </citation>
    <scope>NUCLEOTIDE SEQUENCE [LARGE SCALE GENOMIC DNA]</scope>
    <source>
        <strain>ATCC 29341 / DSM 671 / R1</strain>
    </source>
</reference>
<dbReference type="EMBL" id="AM774415">
    <property type="protein sequence ID" value="CAP14180.1"/>
    <property type="molecule type" value="Genomic_DNA"/>
</dbReference>
<dbReference type="RefSeq" id="WP_010903191.1">
    <property type="nucleotide sequence ID" value="NC_010364.1"/>
</dbReference>
<dbReference type="SMR" id="B0R611"/>
<dbReference type="EnsemblBacteria" id="CAP14180">
    <property type="protein sequence ID" value="CAP14180"/>
    <property type="gene ID" value="OE_3319R"/>
</dbReference>
<dbReference type="KEGG" id="hsl:OE_3319R"/>
<dbReference type="HOGENOM" id="CLU_052508_3_0_2"/>
<dbReference type="PhylomeDB" id="B0R611"/>
<dbReference type="UniPathway" id="UPA00148"/>
<dbReference type="Proteomes" id="UP000001321">
    <property type="component" value="Chromosome"/>
</dbReference>
<dbReference type="GO" id="GO:0043190">
    <property type="term" value="C:ATP-binding cassette (ABC) transporter complex"/>
    <property type="evidence" value="ECO:0007669"/>
    <property type="project" value="InterPro"/>
</dbReference>
<dbReference type="GO" id="GO:0015087">
    <property type="term" value="F:cobalt ion transmembrane transporter activity"/>
    <property type="evidence" value="ECO:0007669"/>
    <property type="project" value="UniProtKB-UniRule"/>
</dbReference>
<dbReference type="GO" id="GO:0009236">
    <property type="term" value="P:cobalamin biosynthetic process"/>
    <property type="evidence" value="ECO:0007669"/>
    <property type="project" value="UniProtKB-UniRule"/>
</dbReference>
<dbReference type="FunFam" id="1.10.1760.20:FF:000001">
    <property type="entry name" value="Cobalt transport protein CbiM"/>
    <property type="match status" value="1"/>
</dbReference>
<dbReference type="Gene3D" id="1.10.1760.20">
    <property type="match status" value="1"/>
</dbReference>
<dbReference type="HAMAP" id="MF_01462">
    <property type="entry name" value="CbiM"/>
    <property type="match status" value="1"/>
</dbReference>
<dbReference type="InterPro" id="IPR018024">
    <property type="entry name" value="CbiM"/>
</dbReference>
<dbReference type="InterPro" id="IPR002751">
    <property type="entry name" value="CbiM/NikMN"/>
</dbReference>
<dbReference type="NCBIfam" id="TIGR00123">
    <property type="entry name" value="cbiM"/>
    <property type="match status" value="1"/>
</dbReference>
<dbReference type="NCBIfam" id="NF006184">
    <property type="entry name" value="PRK08319.1"/>
    <property type="match status" value="1"/>
</dbReference>
<dbReference type="PANTHER" id="PTHR43627">
    <property type="match status" value="1"/>
</dbReference>
<dbReference type="PANTHER" id="PTHR43627:SF1">
    <property type="entry name" value="COBALT TRANSPORT PROTEIN CBIM"/>
    <property type="match status" value="1"/>
</dbReference>
<dbReference type="Pfam" id="PF01891">
    <property type="entry name" value="CbiM"/>
    <property type="match status" value="1"/>
</dbReference>
<protein>
    <recommendedName>
        <fullName evidence="1">Putative cobalt transport protein CbiM</fullName>
    </recommendedName>
    <alternativeName>
        <fullName evidence="1">Energy-coupling factor transporter probable substrate-capture protein CbiM</fullName>
        <shortName evidence="1">ECF transporter S component CbiM</shortName>
    </alternativeName>
</protein>